<feature type="chain" id="PRO_1000124497" description="Transcriptional repressor NrdR">
    <location>
        <begin position="1"/>
        <end position="150"/>
    </location>
</feature>
<feature type="domain" description="ATP-cone" evidence="1">
    <location>
        <begin position="49"/>
        <end position="139"/>
    </location>
</feature>
<feature type="zinc finger region" evidence="1">
    <location>
        <begin position="3"/>
        <end position="34"/>
    </location>
</feature>
<proteinExistence type="inferred from homology"/>
<dbReference type="EMBL" id="CP001251">
    <property type="protein sequence ID" value="ACK42969.1"/>
    <property type="molecule type" value="Genomic_DNA"/>
</dbReference>
<dbReference type="RefSeq" id="WP_012584044.1">
    <property type="nucleotide sequence ID" value="NC_011661.1"/>
</dbReference>
<dbReference type="RefSeq" id="YP_002353583.1">
    <property type="nucleotide sequence ID" value="NC_011661.1"/>
</dbReference>
<dbReference type="SMR" id="B8E395"/>
<dbReference type="FunCoup" id="B8E395">
    <property type="interactions" value="207"/>
</dbReference>
<dbReference type="STRING" id="515635.Dtur_1697"/>
<dbReference type="EnsemblBacteria" id="ACK42969">
    <property type="protein sequence ID" value="ACK42969"/>
    <property type="gene ID" value="Dtur_1697"/>
</dbReference>
<dbReference type="KEGG" id="dtu:Dtur_1697"/>
<dbReference type="PATRIC" id="fig|515635.4.peg.1748"/>
<dbReference type="eggNOG" id="COG1327">
    <property type="taxonomic scope" value="Bacteria"/>
</dbReference>
<dbReference type="HOGENOM" id="CLU_108412_0_0_0"/>
<dbReference type="InParanoid" id="B8E395"/>
<dbReference type="OrthoDB" id="9807461at2"/>
<dbReference type="Proteomes" id="UP000007719">
    <property type="component" value="Chromosome"/>
</dbReference>
<dbReference type="GO" id="GO:0005524">
    <property type="term" value="F:ATP binding"/>
    <property type="evidence" value="ECO:0007669"/>
    <property type="project" value="UniProtKB-KW"/>
</dbReference>
<dbReference type="GO" id="GO:0003690">
    <property type="term" value="F:double-stranded DNA binding"/>
    <property type="evidence" value="ECO:0000318"/>
    <property type="project" value="GO_Central"/>
</dbReference>
<dbReference type="GO" id="GO:0008270">
    <property type="term" value="F:zinc ion binding"/>
    <property type="evidence" value="ECO:0007669"/>
    <property type="project" value="UniProtKB-UniRule"/>
</dbReference>
<dbReference type="GO" id="GO:0045892">
    <property type="term" value="P:negative regulation of DNA-templated transcription"/>
    <property type="evidence" value="ECO:0000318"/>
    <property type="project" value="GO_Central"/>
</dbReference>
<dbReference type="HAMAP" id="MF_00440">
    <property type="entry name" value="NrdR"/>
    <property type="match status" value="1"/>
</dbReference>
<dbReference type="InterPro" id="IPR005144">
    <property type="entry name" value="ATP-cone_dom"/>
</dbReference>
<dbReference type="InterPro" id="IPR055173">
    <property type="entry name" value="NrdR-like_N"/>
</dbReference>
<dbReference type="InterPro" id="IPR003796">
    <property type="entry name" value="RNR_NrdR-like"/>
</dbReference>
<dbReference type="NCBIfam" id="TIGR00244">
    <property type="entry name" value="transcriptional regulator NrdR"/>
    <property type="match status" value="1"/>
</dbReference>
<dbReference type="PANTHER" id="PTHR30455">
    <property type="entry name" value="TRANSCRIPTIONAL REPRESSOR NRDR"/>
    <property type="match status" value="1"/>
</dbReference>
<dbReference type="PANTHER" id="PTHR30455:SF2">
    <property type="entry name" value="TRANSCRIPTIONAL REPRESSOR NRDR"/>
    <property type="match status" value="1"/>
</dbReference>
<dbReference type="Pfam" id="PF03477">
    <property type="entry name" value="ATP-cone"/>
    <property type="match status" value="1"/>
</dbReference>
<dbReference type="Pfam" id="PF22811">
    <property type="entry name" value="Zn_ribbon_NrdR"/>
    <property type="match status" value="1"/>
</dbReference>
<dbReference type="PROSITE" id="PS51161">
    <property type="entry name" value="ATP_CONE"/>
    <property type="match status" value="1"/>
</dbReference>
<gene>
    <name evidence="1" type="primary">nrdR</name>
    <name type="ordered locus">Dtur_1697</name>
</gene>
<comment type="function">
    <text evidence="1">Negatively regulates transcription of bacterial ribonucleotide reductase nrd genes and operons by binding to NrdR-boxes.</text>
</comment>
<comment type="cofactor">
    <cofactor evidence="1">
        <name>Zn(2+)</name>
        <dbReference type="ChEBI" id="CHEBI:29105"/>
    </cofactor>
    <text evidence="1">Binds 1 zinc ion.</text>
</comment>
<comment type="similarity">
    <text evidence="1">Belongs to the NrdR family.</text>
</comment>
<sequence length="150" mass="17726">MRCPFCGYEDTFVIDTREIEDQKVIRRRRECPNCKNRFTTYERIEEKPIMVIKKDGRREPFDRNKLLAGLQRAVVKRNIDNEKLEAIIDEIITNIRKQGVSEITSKEIGKMVLEKLKDLDAVAYVRFASVYQEFSSLEEFAKLLSQMKEE</sequence>
<evidence type="ECO:0000255" key="1">
    <source>
        <dbReference type="HAMAP-Rule" id="MF_00440"/>
    </source>
</evidence>
<accession>B8E395</accession>
<name>NRDR_DICTD</name>
<reference key="1">
    <citation type="journal article" date="2016" name="Front. Microbiol.">
        <title>The complete genome sequence of hyperthermophile Dictyoglomus turgidum DSM 6724 reveals a specialized carbohydrate fermentor.</title>
        <authorList>
            <person name="Brumm P.J."/>
            <person name="Gowda K."/>
            <person name="Robb F.T."/>
            <person name="Mead D.A."/>
        </authorList>
    </citation>
    <scope>NUCLEOTIDE SEQUENCE [LARGE SCALE GENOMIC DNA]</scope>
    <source>
        <strain>DSM 6724 / Z-1310</strain>
    </source>
</reference>
<protein>
    <recommendedName>
        <fullName evidence="1">Transcriptional repressor NrdR</fullName>
    </recommendedName>
</protein>
<organism>
    <name type="scientific">Dictyoglomus turgidum (strain DSM 6724 / Z-1310)</name>
    <dbReference type="NCBI Taxonomy" id="515635"/>
    <lineage>
        <taxon>Bacteria</taxon>
        <taxon>Pseudomonadati</taxon>
        <taxon>Dictyoglomota</taxon>
        <taxon>Dictyoglomia</taxon>
        <taxon>Dictyoglomales</taxon>
        <taxon>Dictyoglomaceae</taxon>
        <taxon>Dictyoglomus</taxon>
    </lineage>
</organism>
<keyword id="KW-0067">ATP-binding</keyword>
<keyword id="KW-0238">DNA-binding</keyword>
<keyword id="KW-0479">Metal-binding</keyword>
<keyword id="KW-0547">Nucleotide-binding</keyword>
<keyword id="KW-1185">Reference proteome</keyword>
<keyword id="KW-0678">Repressor</keyword>
<keyword id="KW-0804">Transcription</keyword>
<keyword id="KW-0805">Transcription regulation</keyword>
<keyword id="KW-0862">Zinc</keyword>
<keyword id="KW-0863">Zinc-finger</keyword>